<sequence length="54" mass="5758">VATVDCSGYPKPACTMEYMPLCGSDNKTYGNKCNFCNAVVDSNGTLTLSHFGKC</sequence>
<dbReference type="PIR" id="D31439">
    <property type="entry name" value="D31439"/>
</dbReference>
<dbReference type="SMR" id="P05571"/>
<dbReference type="GO" id="GO:0005576">
    <property type="term" value="C:extracellular region"/>
    <property type="evidence" value="ECO:0007669"/>
    <property type="project" value="UniProtKB-SubCell"/>
</dbReference>
<dbReference type="GO" id="GO:0004867">
    <property type="term" value="F:serine-type endopeptidase inhibitor activity"/>
    <property type="evidence" value="ECO:0007669"/>
    <property type="project" value="UniProtKB-KW"/>
</dbReference>
<dbReference type="CDD" id="cd00104">
    <property type="entry name" value="KAZAL_FS"/>
    <property type="match status" value="1"/>
</dbReference>
<dbReference type="FunFam" id="3.30.60.30:FF:000037">
    <property type="entry name" value="Ovomucoid"/>
    <property type="match status" value="1"/>
</dbReference>
<dbReference type="Gene3D" id="3.30.60.30">
    <property type="match status" value="1"/>
</dbReference>
<dbReference type="InterPro" id="IPR051597">
    <property type="entry name" value="Bifunctional_prot_inhibitor"/>
</dbReference>
<dbReference type="InterPro" id="IPR002350">
    <property type="entry name" value="Kazal_dom"/>
</dbReference>
<dbReference type="InterPro" id="IPR036058">
    <property type="entry name" value="Kazal_dom_sf"/>
</dbReference>
<dbReference type="InterPro" id="IPR001239">
    <property type="entry name" value="Prot_inh_Kazal-m"/>
</dbReference>
<dbReference type="PANTHER" id="PTHR47729:SF1">
    <property type="entry name" value="OVOMUCOID-LIKE-RELATED"/>
    <property type="match status" value="1"/>
</dbReference>
<dbReference type="PANTHER" id="PTHR47729">
    <property type="entry name" value="SERINE PEPTIDASE INHIBITOR, KAZAL TYPE 2, TANDEM DUPLICATE 1-RELATED"/>
    <property type="match status" value="1"/>
</dbReference>
<dbReference type="Pfam" id="PF00050">
    <property type="entry name" value="Kazal_1"/>
    <property type="match status" value="1"/>
</dbReference>
<dbReference type="PRINTS" id="PR00290">
    <property type="entry name" value="KAZALINHBTR"/>
</dbReference>
<dbReference type="SMART" id="SM00280">
    <property type="entry name" value="KAZAL"/>
    <property type="match status" value="1"/>
</dbReference>
<dbReference type="SUPFAM" id="SSF100895">
    <property type="entry name" value="Kazal-type serine protease inhibitors"/>
    <property type="match status" value="1"/>
</dbReference>
<dbReference type="PROSITE" id="PS00282">
    <property type="entry name" value="KAZAL_1"/>
    <property type="match status" value="1"/>
</dbReference>
<dbReference type="PROSITE" id="PS51465">
    <property type="entry name" value="KAZAL_2"/>
    <property type="match status" value="1"/>
</dbReference>
<keyword id="KW-0903">Direct protein sequencing</keyword>
<keyword id="KW-1015">Disulfide bond</keyword>
<keyword id="KW-0325">Glycoprotein</keyword>
<keyword id="KW-0646">Protease inhibitor</keyword>
<keyword id="KW-0677">Repeat</keyword>
<keyword id="KW-0964">Secreted</keyword>
<keyword id="KW-0722">Serine protease inhibitor</keyword>
<accession>P05571</accession>
<feature type="chain" id="PRO_0000073089" description="Ovomucoid">
    <location>
        <begin position="1" status="less than"/>
        <end position="54" status="greater than"/>
    </location>
</feature>
<feature type="domain" description="Kazal-like" evidence="1">
    <location>
        <begin position="4"/>
        <end position="54"/>
    </location>
</feature>
<feature type="site" description="Reactive bond 3">
    <location>
        <begin position="16"/>
        <end position="17"/>
    </location>
</feature>
<feature type="glycosylation site" description="N-linked (GlcNAc...) asparagine">
    <location>
        <position position="43"/>
    </location>
</feature>
<feature type="disulfide bond">
    <location>
        <begin position="6"/>
        <end position="36"/>
    </location>
</feature>
<feature type="disulfide bond">
    <location>
        <begin position="14"/>
        <end position="33"/>
    </location>
</feature>
<feature type="disulfide bond">
    <location>
        <begin position="22"/>
        <end position="54"/>
    </location>
</feature>
<feature type="non-terminal residue">
    <location>
        <position position="1"/>
    </location>
</feature>
<feature type="non-terminal residue">
    <location>
        <position position="54"/>
    </location>
</feature>
<reference key="1">
    <citation type="journal article" date="1987" name="Biochemistry">
        <title>Ovomucoid third domains from 100 avian species: isolation, sequences, and hypervariability of enzyme-inhibitor contact residues.</title>
        <authorList>
            <person name="Laskowski M. Jr."/>
            <person name="Kato I."/>
            <person name="Ardelt W."/>
            <person name="Cook J."/>
            <person name="Denton A."/>
            <person name="Empie M.W."/>
            <person name="Kohr W.J."/>
            <person name="Park S.J."/>
            <person name="Parks K."/>
            <person name="Schatzley B.L."/>
            <person name="Schoenberger O.L."/>
            <person name="Tashiro M."/>
            <person name="Vichot G."/>
            <person name="Whatley H.E."/>
            <person name="Wieczorek A."/>
            <person name="Wieczorek M."/>
        </authorList>
    </citation>
    <scope>PROTEIN SEQUENCE</scope>
</reference>
<comment type="subcellular location">
    <subcellularLocation>
        <location>Secreted</location>
    </subcellularLocation>
</comment>
<comment type="domain">
    <text>Avian ovomucoid consists of three homologous, tandem Kazal family inhibitory domains.</text>
</comment>
<proteinExistence type="evidence at protein level"/>
<organism>
    <name type="scientific">Coscoroba coscoroba</name>
    <name type="common">Coscoroba swan</name>
    <name type="synonym">Anas coscoroba</name>
    <dbReference type="NCBI Taxonomy" id="8863"/>
    <lineage>
        <taxon>Eukaryota</taxon>
        <taxon>Metazoa</taxon>
        <taxon>Chordata</taxon>
        <taxon>Craniata</taxon>
        <taxon>Vertebrata</taxon>
        <taxon>Euteleostomi</taxon>
        <taxon>Archelosauria</taxon>
        <taxon>Archosauria</taxon>
        <taxon>Dinosauria</taxon>
        <taxon>Saurischia</taxon>
        <taxon>Theropoda</taxon>
        <taxon>Coelurosauria</taxon>
        <taxon>Aves</taxon>
        <taxon>Neognathae</taxon>
        <taxon>Galloanserae</taxon>
        <taxon>Anseriformes</taxon>
        <taxon>Anatidae</taxon>
        <taxon>Anserinae</taxon>
        <taxon>Coscoroba</taxon>
    </lineage>
</organism>
<evidence type="ECO:0000255" key="1">
    <source>
        <dbReference type="PROSITE-ProRule" id="PRU00798"/>
    </source>
</evidence>
<name>IOVO_COSCO</name>
<protein>
    <recommendedName>
        <fullName>Ovomucoid</fullName>
    </recommendedName>
</protein>